<comment type="similarity">
    <text evidence="2">Belongs to the UPF0337 (CsbD) family.</text>
</comment>
<evidence type="ECO:0000256" key="1">
    <source>
        <dbReference type="SAM" id="MobiDB-lite"/>
    </source>
</evidence>
<evidence type="ECO:0000305" key="2"/>
<reference key="1">
    <citation type="journal article" date="2001" name="Proc. Natl. Acad. Sci. U.S.A.">
        <title>Complete genome sequence of Caulobacter crescentus.</title>
        <authorList>
            <person name="Nierman W.C."/>
            <person name="Feldblyum T.V."/>
            <person name="Laub M.T."/>
            <person name="Paulsen I.T."/>
            <person name="Nelson K.E."/>
            <person name="Eisen J.A."/>
            <person name="Heidelberg J.F."/>
            <person name="Alley M.R.K."/>
            <person name="Ohta N."/>
            <person name="Maddock J.R."/>
            <person name="Potocka I."/>
            <person name="Nelson W.C."/>
            <person name="Newton A."/>
            <person name="Stephens C."/>
            <person name="Phadke N.D."/>
            <person name="Ely B."/>
            <person name="DeBoy R.T."/>
            <person name="Dodson R.J."/>
            <person name="Durkin A.S."/>
            <person name="Gwinn M.L."/>
            <person name="Haft D.H."/>
            <person name="Kolonay J.F."/>
            <person name="Smit J."/>
            <person name="Craven M.B."/>
            <person name="Khouri H.M."/>
            <person name="Shetty J."/>
            <person name="Berry K.J."/>
            <person name="Utterback T.R."/>
            <person name="Tran K."/>
            <person name="Wolf A.M."/>
            <person name="Vamathevan J.J."/>
            <person name="Ermolaeva M.D."/>
            <person name="White O."/>
            <person name="Salzberg S.L."/>
            <person name="Venter J.C."/>
            <person name="Shapiro L."/>
            <person name="Fraser C.M."/>
        </authorList>
    </citation>
    <scope>NUCLEOTIDE SEQUENCE [LARGE SCALE GENOMIC DNA]</scope>
    <source>
        <strain>ATCC 19089 / CIP 103742 / CB 15</strain>
    </source>
</reference>
<proteinExistence type="inferred from homology"/>
<gene>
    <name type="ordered locus">CC_0938</name>
</gene>
<dbReference type="EMBL" id="AE005673">
    <property type="protein sequence ID" value="AAK22922.1"/>
    <property type="molecule type" value="Genomic_DNA"/>
</dbReference>
<dbReference type="PIR" id="F87365">
    <property type="entry name" value="F87365"/>
</dbReference>
<dbReference type="RefSeq" id="NP_419754.1">
    <property type="nucleotide sequence ID" value="NC_002696.2"/>
</dbReference>
<dbReference type="RefSeq" id="WP_010918822.1">
    <property type="nucleotide sequence ID" value="NC_002696.2"/>
</dbReference>
<dbReference type="SMR" id="Q9A9N8"/>
<dbReference type="STRING" id="190650.CC_0938"/>
<dbReference type="EnsemblBacteria" id="AAK22922">
    <property type="protein sequence ID" value="AAK22922"/>
    <property type="gene ID" value="CC_0938"/>
</dbReference>
<dbReference type="KEGG" id="ccr:CC_0938"/>
<dbReference type="PATRIC" id="fig|190650.5.peg.952"/>
<dbReference type="eggNOG" id="COG3237">
    <property type="taxonomic scope" value="Bacteria"/>
</dbReference>
<dbReference type="HOGENOM" id="CLU_135567_3_3_5"/>
<dbReference type="BioCyc" id="CAULO:CC0938-MONOMER"/>
<dbReference type="Proteomes" id="UP000001816">
    <property type="component" value="Chromosome"/>
</dbReference>
<dbReference type="Gene3D" id="1.10.1470.10">
    <property type="entry name" value="YjbJ"/>
    <property type="match status" value="1"/>
</dbReference>
<dbReference type="InterPro" id="IPR008462">
    <property type="entry name" value="CsbD"/>
</dbReference>
<dbReference type="InterPro" id="IPR036629">
    <property type="entry name" value="YjbJ_sf"/>
</dbReference>
<dbReference type="Pfam" id="PF05532">
    <property type="entry name" value="CsbD"/>
    <property type="match status" value="1"/>
</dbReference>
<dbReference type="SUPFAM" id="SSF69047">
    <property type="entry name" value="Hypothetical protein YjbJ"/>
    <property type="match status" value="1"/>
</dbReference>
<feature type="chain" id="PRO_0000209995" description="UPF0337 protein CC_0938">
    <location>
        <begin position="1"/>
        <end position="67"/>
    </location>
</feature>
<feature type="region of interest" description="Disordered" evidence="1">
    <location>
        <begin position="37"/>
        <end position="67"/>
    </location>
</feature>
<feature type="compositionally biased region" description="Basic and acidic residues" evidence="1">
    <location>
        <begin position="41"/>
        <end position="61"/>
    </location>
</feature>
<accession>Q9A9N8</accession>
<protein>
    <recommendedName>
        <fullName>UPF0337 protein CC_0938</fullName>
    </recommendedName>
</protein>
<name>Y938_CAUVC</name>
<sequence length="67" mass="6932">MAMSTNRIGGAIDKGVGAAKEAVGKATGNARLQVEGAAQKAKGDLQNKVGKAQDKARRRDQALNARL</sequence>
<organism>
    <name type="scientific">Caulobacter vibrioides (strain ATCC 19089 / CIP 103742 / CB 15)</name>
    <name type="common">Caulobacter crescentus</name>
    <dbReference type="NCBI Taxonomy" id="190650"/>
    <lineage>
        <taxon>Bacteria</taxon>
        <taxon>Pseudomonadati</taxon>
        <taxon>Pseudomonadota</taxon>
        <taxon>Alphaproteobacteria</taxon>
        <taxon>Caulobacterales</taxon>
        <taxon>Caulobacteraceae</taxon>
        <taxon>Caulobacter</taxon>
    </lineage>
</organism>
<keyword id="KW-1185">Reference proteome</keyword>